<accession>Q9PMG4</accession>
<accession>Q0P8B9</accession>
<evidence type="ECO:0000255" key="1">
    <source>
        <dbReference type="HAMAP-Rule" id="MF_00011"/>
    </source>
</evidence>
<evidence type="ECO:0007829" key="2">
    <source>
        <dbReference type="PDB" id="3R7T"/>
    </source>
</evidence>
<feature type="chain" id="PRO_0000095160" description="Adenylosuccinate synthetase">
    <location>
        <begin position="1"/>
        <end position="416"/>
    </location>
</feature>
<feature type="active site" description="Proton acceptor" evidence="1">
    <location>
        <position position="14"/>
    </location>
</feature>
<feature type="active site" description="Proton donor" evidence="1">
    <location>
        <position position="42"/>
    </location>
</feature>
<feature type="binding site" evidence="1">
    <location>
        <begin position="13"/>
        <end position="19"/>
    </location>
    <ligand>
        <name>GTP</name>
        <dbReference type="ChEBI" id="CHEBI:37565"/>
    </ligand>
</feature>
<feature type="binding site" description="in other chain" evidence="1">
    <location>
        <begin position="14"/>
        <end position="17"/>
    </location>
    <ligand>
        <name>IMP</name>
        <dbReference type="ChEBI" id="CHEBI:58053"/>
        <note>ligand shared between dimeric partners</note>
    </ligand>
</feature>
<feature type="binding site" evidence="1">
    <location>
        <position position="14"/>
    </location>
    <ligand>
        <name>Mg(2+)</name>
        <dbReference type="ChEBI" id="CHEBI:18420"/>
    </ligand>
</feature>
<feature type="binding site" description="in other chain" evidence="1">
    <location>
        <begin position="39"/>
        <end position="42"/>
    </location>
    <ligand>
        <name>IMP</name>
        <dbReference type="ChEBI" id="CHEBI:58053"/>
        <note>ligand shared between dimeric partners</note>
    </ligand>
</feature>
<feature type="binding site" evidence="1">
    <location>
        <begin position="41"/>
        <end position="43"/>
    </location>
    <ligand>
        <name>GTP</name>
        <dbReference type="ChEBI" id="CHEBI:37565"/>
    </ligand>
</feature>
<feature type="binding site" evidence="1">
    <location>
        <position position="41"/>
    </location>
    <ligand>
        <name>Mg(2+)</name>
        <dbReference type="ChEBI" id="CHEBI:18420"/>
    </ligand>
</feature>
<feature type="binding site" description="in other chain" evidence="1">
    <location>
        <position position="126"/>
    </location>
    <ligand>
        <name>IMP</name>
        <dbReference type="ChEBI" id="CHEBI:58053"/>
        <note>ligand shared between dimeric partners</note>
    </ligand>
</feature>
<feature type="binding site" evidence="1">
    <location>
        <position position="140"/>
    </location>
    <ligand>
        <name>IMP</name>
        <dbReference type="ChEBI" id="CHEBI:58053"/>
        <note>ligand shared between dimeric partners</note>
    </ligand>
</feature>
<feature type="binding site" description="in other chain" evidence="1">
    <location>
        <position position="220"/>
    </location>
    <ligand>
        <name>IMP</name>
        <dbReference type="ChEBI" id="CHEBI:58053"/>
        <note>ligand shared between dimeric partners</note>
    </ligand>
</feature>
<feature type="binding site" description="in other chain" evidence="1">
    <location>
        <position position="235"/>
    </location>
    <ligand>
        <name>IMP</name>
        <dbReference type="ChEBI" id="CHEBI:58053"/>
        <note>ligand shared between dimeric partners</note>
    </ligand>
</feature>
<feature type="binding site" evidence="1">
    <location>
        <begin position="295"/>
        <end position="301"/>
    </location>
    <ligand>
        <name>substrate</name>
    </ligand>
</feature>
<feature type="binding site" description="in other chain" evidence="1">
    <location>
        <position position="299"/>
    </location>
    <ligand>
        <name>IMP</name>
        <dbReference type="ChEBI" id="CHEBI:58053"/>
        <note>ligand shared between dimeric partners</note>
    </ligand>
</feature>
<feature type="binding site" evidence="1">
    <location>
        <position position="301"/>
    </location>
    <ligand>
        <name>GTP</name>
        <dbReference type="ChEBI" id="CHEBI:37565"/>
    </ligand>
</feature>
<feature type="binding site" evidence="1">
    <location>
        <begin position="327"/>
        <end position="329"/>
    </location>
    <ligand>
        <name>GTP</name>
        <dbReference type="ChEBI" id="CHEBI:37565"/>
    </ligand>
</feature>
<feature type="binding site" evidence="1">
    <location>
        <begin position="405"/>
        <end position="407"/>
    </location>
    <ligand>
        <name>GTP</name>
        <dbReference type="ChEBI" id="CHEBI:37565"/>
    </ligand>
</feature>
<feature type="strand" evidence="2">
    <location>
        <begin position="4"/>
        <end position="9"/>
    </location>
</feature>
<feature type="strand" evidence="2">
    <location>
        <begin position="11"/>
        <end position="13"/>
    </location>
</feature>
<feature type="helix" evidence="2">
    <location>
        <begin position="17"/>
        <end position="25"/>
    </location>
</feature>
<feature type="strand" evidence="2">
    <location>
        <begin position="29"/>
        <end position="33"/>
    </location>
</feature>
<feature type="strand" evidence="2">
    <location>
        <begin position="40"/>
        <end position="46"/>
    </location>
</feature>
<feature type="strand" evidence="2">
    <location>
        <begin position="49"/>
        <end position="56"/>
    </location>
</feature>
<feature type="helix" evidence="2">
    <location>
        <begin position="58"/>
        <end position="61"/>
    </location>
</feature>
<feature type="strand" evidence="2">
    <location>
        <begin position="66"/>
        <end position="69"/>
    </location>
</feature>
<feature type="strand" evidence="2">
    <location>
        <begin position="73"/>
        <end position="75"/>
    </location>
</feature>
<feature type="helix" evidence="2">
    <location>
        <begin position="77"/>
        <end position="84"/>
    </location>
</feature>
<feature type="turn" evidence="2">
    <location>
        <begin position="91"/>
        <end position="93"/>
    </location>
</feature>
<feature type="strand" evidence="2">
    <location>
        <begin position="94"/>
        <end position="97"/>
    </location>
</feature>
<feature type="strand" evidence="2">
    <location>
        <begin position="100"/>
        <end position="102"/>
    </location>
</feature>
<feature type="helix" evidence="2">
    <location>
        <begin position="105"/>
        <end position="117"/>
    </location>
</feature>
<feature type="helix" evidence="2">
    <location>
        <begin position="130"/>
        <end position="138"/>
    </location>
</feature>
<feature type="helix" evidence="2">
    <location>
        <begin position="145"/>
        <end position="149"/>
    </location>
</feature>
<feature type="helix" evidence="2">
    <location>
        <begin position="151"/>
        <end position="164"/>
    </location>
</feature>
<feature type="helix" evidence="2">
    <location>
        <begin position="166"/>
        <end position="171"/>
    </location>
</feature>
<feature type="helix" evidence="2">
    <location>
        <begin position="179"/>
        <end position="193"/>
    </location>
</feature>
<feature type="helix" evidence="2">
    <location>
        <begin position="194"/>
        <end position="196"/>
    </location>
</feature>
<feature type="helix" evidence="2">
    <location>
        <begin position="200"/>
        <end position="209"/>
    </location>
</feature>
<feature type="strand" evidence="2">
    <location>
        <begin position="214"/>
        <end position="217"/>
    </location>
</feature>
<feature type="helix" evidence="2">
    <location>
        <begin position="222"/>
        <end position="224"/>
    </location>
</feature>
<feature type="turn" evidence="2">
    <location>
        <begin position="226"/>
        <end position="228"/>
    </location>
</feature>
<feature type="helix" evidence="2">
    <location>
        <begin position="241"/>
        <end position="247"/>
    </location>
</feature>
<feature type="helix" evidence="2">
    <location>
        <begin position="252"/>
        <end position="254"/>
    </location>
</feature>
<feature type="strand" evidence="2">
    <location>
        <begin position="255"/>
        <end position="272"/>
    </location>
</feature>
<feature type="helix" evidence="2">
    <location>
        <begin position="281"/>
        <end position="289"/>
    </location>
</feature>
<feature type="turn" evidence="2">
    <location>
        <begin position="295"/>
        <end position="297"/>
    </location>
</feature>
<feature type="strand" evidence="2">
    <location>
        <begin position="302"/>
        <end position="304"/>
    </location>
</feature>
<feature type="helix" evidence="2">
    <location>
        <begin position="308"/>
        <end position="318"/>
    </location>
</feature>
<feature type="strand" evidence="2">
    <location>
        <begin position="321"/>
        <end position="326"/>
    </location>
</feature>
<feature type="helix" evidence="2">
    <location>
        <begin position="328"/>
        <end position="331"/>
    </location>
</feature>
<feature type="strand" evidence="2">
    <location>
        <begin position="335"/>
        <end position="345"/>
    </location>
</feature>
<feature type="strand" evidence="2">
    <location>
        <begin position="348"/>
        <end position="352"/>
    </location>
</feature>
<feature type="helix" evidence="2">
    <location>
        <begin position="357"/>
        <end position="359"/>
    </location>
</feature>
<feature type="strand" evidence="2">
    <location>
        <begin position="360"/>
        <end position="368"/>
    </location>
</feature>
<feature type="helix" evidence="2">
    <location>
        <begin position="379"/>
        <end position="381"/>
    </location>
</feature>
<feature type="helix" evidence="2">
    <location>
        <begin position="384"/>
        <end position="397"/>
    </location>
</feature>
<feature type="strand" evidence="2">
    <location>
        <begin position="401"/>
        <end position="405"/>
    </location>
</feature>
<feature type="strand" evidence="2">
    <location>
        <begin position="407"/>
        <end position="409"/>
    </location>
</feature>
<feature type="strand" evidence="2">
    <location>
        <begin position="413"/>
        <end position="415"/>
    </location>
</feature>
<reference key="1">
    <citation type="journal article" date="2000" name="Nature">
        <title>The genome sequence of the food-borne pathogen Campylobacter jejuni reveals hypervariable sequences.</title>
        <authorList>
            <person name="Parkhill J."/>
            <person name="Wren B.W."/>
            <person name="Mungall K.L."/>
            <person name="Ketley J.M."/>
            <person name="Churcher C.M."/>
            <person name="Basham D."/>
            <person name="Chillingworth T."/>
            <person name="Davies R.M."/>
            <person name="Feltwell T."/>
            <person name="Holroyd S."/>
            <person name="Jagels K."/>
            <person name="Karlyshev A.V."/>
            <person name="Moule S."/>
            <person name="Pallen M.J."/>
            <person name="Penn C.W."/>
            <person name="Quail M.A."/>
            <person name="Rajandream M.A."/>
            <person name="Rutherford K.M."/>
            <person name="van Vliet A.H.M."/>
            <person name="Whitehead S."/>
            <person name="Barrell B.G."/>
        </authorList>
    </citation>
    <scope>NUCLEOTIDE SEQUENCE [LARGE SCALE GENOMIC DNA]</scope>
    <source>
        <strain>ATCC 700819 / NCTC 11168</strain>
    </source>
</reference>
<keyword id="KW-0002">3D-structure</keyword>
<keyword id="KW-0963">Cytoplasm</keyword>
<keyword id="KW-0342">GTP-binding</keyword>
<keyword id="KW-0436">Ligase</keyword>
<keyword id="KW-0460">Magnesium</keyword>
<keyword id="KW-0479">Metal-binding</keyword>
<keyword id="KW-0547">Nucleotide-binding</keyword>
<keyword id="KW-0658">Purine biosynthesis</keyword>
<keyword id="KW-1185">Reference proteome</keyword>
<comment type="function">
    <text evidence="1">Plays an important role in the de novo pathway of purine nucleotide biosynthesis. Catalyzes the first committed step in the biosynthesis of AMP from IMP.</text>
</comment>
<comment type="catalytic activity">
    <reaction evidence="1">
        <text>IMP + L-aspartate + GTP = N(6)-(1,2-dicarboxyethyl)-AMP + GDP + phosphate + 2 H(+)</text>
        <dbReference type="Rhea" id="RHEA:15753"/>
        <dbReference type="ChEBI" id="CHEBI:15378"/>
        <dbReference type="ChEBI" id="CHEBI:29991"/>
        <dbReference type="ChEBI" id="CHEBI:37565"/>
        <dbReference type="ChEBI" id="CHEBI:43474"/>
        <dbReference type="ChEBI" id="CHEBI:57567"/>
        <dbReference type="ChEBI" id="CHEBI:58053"/>
        <dbReference type="ChEBI" id="CHEBI:58189"/>
        <dbReference type="EC" id="6.3.4.4"/>
    </reaction>
</comment>
<comment type="cofactor">
    <cofactor evidence="1">
        <name>Mg(2+)</name>
        <dbReference type="ChEBI" id="CHEBI:18420"/>
    </cofactor>
    <text evidence="1">Binds 1 Mg(2+) ion per subunit.</text>
</comment>
<comment type="pathway">
    <text evidence="1">Purine metabolism; AMP biosynthesis via de novo pathway; AMP from IMP: step 1/2.</text>
</comment>
<comment type="subunit">
    <text evidence="1">Homodimer.</text>
</comment>
<comment type="subcellular location">
    <subcellularLocation>
        <location evidence="1">Cytoplasm</location>
    </subcellularLocation>
</comment>
<comment type="similarity">
    <text evidence="1">Belongs to the adenylosuccinate synthetase family.</text>
</comment>
<protein>
    <recommendedName>
        <fullName evidence="1">Adenylosuccinate synthetase</fullName>
        <shortName evidence="1">AMPSase</shortName>
        <shortName evidence="1">AdSS</shortName>
        <ecNumber evidence="1">6.3.4.4</ecNumber>
    </recommendedName>
    <alternativeName>
        <fullName evidence="1">IMP--aspartate ligase</fullName>
    </alternativeName>
</protein>
<name>PURA_CAMJE</name>
<gene>
    <name evidence="1" type="primary">purA</name>
    <name type="ordered locus">Cj1498c</name>
</gene>
<organism>
    <name type="scientific">Campylobacter jejuni subsp. jejuni serotype O:2 (strain ATCC 700819 / NCTC 11168)</name>
    <dbReference type="NCBI Taxonomy" id="192222"/>
    <lineage>
        <taxon>Bacteria</taxon>
        <taxon>Pseudomonadati</taxon>
        <taxon>Campylobacterota</taxon>
        <taxon>Epsilonproteobacteria</taxon>
        <taxon>Campylobacterales</taxon>
        <taxon>Campylobacteraceae</taxon>
        <taxon>Campylobacter</taxon>
    </lineage>
</organism>
<sequence>MSKADIIVGIQWGDEGKGKVVDKLCENYDFVCRSAGGHNAGHTIWVNGVRYALHLMPSGVLHPRCINIIGNGVVVSPEVLIAEMAQFENLKGRLYISDRAHLNLKHHSLIDIAKEKLKGKNAIGTTGKGIGPSYADKINRTGHRVGELLEPQRLCEALIKDFEANKTFFEMLEIEIPSAEELLADLKRFNEILTPYITDTTRMLWKALDEDKRVLLEGAQGSMLDIDHGTYPYVTSSSTISAGTLTGLGLNPKEAGNIIGIVKAYATRVGNGAFPTEDKGEDGEKIAQIGKEIGVSTGRKRRCGWFDAVAVRYTARLNGLDALSLMKLDVLDGFEKIKICRAYEYKGMEIDYIPSDLENVQPIYEEMDGWDKVFGIKDYDLLPENAKKYIARLEELAGVKVKYISTSPERDDTIIL</sequence>
<proteinExistence type="evidence at protein level"/>
<dbReference type="EC" id="6.3.4.4" evidence="1"/>
<dbReference type="EMBL" id="AL111168">
    <property type="protein sequence ID" value="CAL35605.1"/>
    <property type="molecule type" value="Genomic_DNA"/>
</dbReference>
<dbReference type="PIR" id="G81296">
    <property type="entry name" value="G81296"/>
</dbReference>
<dbReference type="RefSeq" id="WP_002851458.1">
    <property type="nucleotide sequence ID" value="NZ_SZUC01000003.1"/>
</dbReference>
<dbReference type="RefSeq" id="YP_002344878.1">
    <property type="nucleotide sequence ID" value="NC_002163.1"/>
</dbReference>
<dbReference type="PDB" id="3R7T">
    <property type="method" value="X-ray"/>
    <property type="resolution" value="2.30 A"/>
    <property type="chains" value="A=1-416"/>
</dbReference>
<dbReference type="PDBsum" id="3R7T"/>
<dbReference type="SMR" id="Q9PMG4"/>
<dbReference type="STRING" id="192222.Cj1498c"/>
<dbReference type="PaxDb" id="192222-Cj1498c"/>
<dbReference type="EnsemblBacteria" id="CAL35605">
    <property type="protein sequence ID" value="CAL35605"/>
    <property type="gene ID" value="Cj1498c"/>
</dbReference>
<dbReference type="GeneID" id="905786"/>
<dbReference type="KEGG" id="cje:Cj1498c"/>
<dbReference type="PATRIC" id="fig|192222.6.peg.1478"/>
<dbReference type="eggNOG" id="COG0104">
    <property type="taxonomic scope" value="Bacteria"/>
</dbReference>
<dbReference type="HOGENOM" id="CLU_029848_0_0_7"/>
<dbReference type="OrthoDB" id="9807553at2"/>
<dbReference type="UniPathway" id="UPA00075">
    <property type="reaction ID" value="UER00335"/>
</dbReference>
<dbReference type="EvolutionaryTrace" id="Q9PMG4"/>
<dbReference type="Proteomes" id="UP000000799">
    <property type="component" value="Chromosome"/>
</dbReference>
<dbReference type="GO" id="GO:0005737">
    <property type="term" value="C:cytoplasm"/>
    <property type="evidence" value="ECO:0007669"/>
    <property type="project" value="UniProtKB-SubCell"/>
</dbReference>
<dbReference type="GO" id="GO:0004019">
    <property type="term" value="F:adenylosuccinate synthase activity"/>
    <property type="evidence" value="ECO:0007669"/>
    <property type="project" value="UniProtKB-UniRule"/>
</dbReference>
<dbReference type="GO" id="GO:0005525">
    <property type="term" value="F:GTP binding"/>
    <property type="evidence" value="ECO:0007669"/>
    <property type="project" value="UniProtKB-UniRule"/>
</dbReference>
<dbReference type="GO" id="GO:0000287">
    <property type="term" value="F:magnesium ion binding"/>
    <property type="evidence" value="ECO:0007669"/>
    <property type="project" value="UniProtKB-UniRule"/>
</dbReference>
<dbReference type="GO" id="GO:0044208">
    <property type="term" value="P:'de novo' AMP biosynthetic process"/>
    <property type="evidence" value="ECO:0007669"/>
    <property type="project" value="UniProtKB-UniRule"/>
</dbReference>
<dbReference type="GO" id="GO:0046040">
    <property type="term" value="P:IMP metabolic process"/>
    <property type="evidence" value="ECO:0007669"/>
    <property type="project" value="TreeGrafter"/>
</dbReference>
<dbReference type="CDD" id="cd03108">
    <property type="entry name" value="AdSS"/>
    <property type="match status" value="1"/>
</dbReference>
<dbReference type="FunFam" id="1.10.300.10:FF:000001">
    <property type="entry name" value="Adenylosuccinate synthetase"/>
    <property type="match status" value="1"/>
</dbReference>
<dbReference type="FunFam" id="3.90.170.10:FF:000001">
    <property type="entry name" value="Adenylosuccinate synthetase"/>
    <property type="match status" value="1"/>
</dbReference>
<dbReference type="Gene3D" id="3.40.440.10">
    <property type="entry name" value="Adenylosuccinate Synthetase, subunit A, domain 1"/>
    <property type="match status" value="1"/>
</dbReference>
<dbReference type="Gene3D" id="1.10.300.10">
    <property type="entry name" value="Adenylosuccinate Synthetase, subunit A, domain 2"/>
    <property type="match status" value="1"/>
</dbReference>
<dbReference type="Gene3D" id="3.90.170.10">
    <property type="entry name" value="Adenylosuccinate Synthetase, subunit A, domain 3"/>
    <property type="match status" value="1"/>
</dbReference>
<dbReference type="HAMAP" id="MF_00011">
    <property type="entry name" value="Adenylosucc_synth"/>
    <property type="match status" value="1"/>
</dbReference>
<dbReference type="InterPro" id="IPR018220">
    <property type="entry name" value="Adenylosuccin_syn_GTP-bd"/>
</dbReference>
<dbReference type="InterPro" id="IPR033128">
    <property type="entry name" value="Adenylosuccin_syn_Lys_AS"/>
</dbReference>
<dbReference type="InterPro" id="IPR042109">
    <property type="entry name" value="Adenylosuccinate_synth_dom1"/>
</dbReference>
<dbReference type="InterPro" id="IPR042110">
    <property type="entry name" value="Adenylosuccinate_synth_dom2"/>
</dbReference>
<dbReference type="InterPro" id="IPR042111">
    <property type="entry name" value="Adenylosuccinate_synth_dom3"/>
</dbReference>
<dbReference type="InterPro" id="IPR001114">
    <property type="entry name" value="Adenylosuccinate_synthetase"/>
</dbReference>
<dbReference type="InterPro" id="IPR027417">
    <property type="entry name" value="P-loop_NTPase"/>
</dbReference>
<dbReference type="NCBIfam" id="NF002223">
    <property type="entry name" value="PRK01117.1"/>
    <property type="match status" value="1"/>
</dbReference>
<dbReference type="NCBIfam" id="TIGR00184">
    <property type="entry name" value="purA"/>
    <property type="match status" value="1"/>
</dbReference>
<dbReference type="PANTHER" id="PTHR11846">
    <property type="entry name" value="ADENYLOSUCCINATE SYNTHETASE"/>
    <property type="match status" value="1"/>
</dbReference>
<dbReference type="PANTHER" id="PTHR11846:SF0">
    <property type="entry name" value="ADENYLOSUCCINATE SYNTHETASE"/>
    <property type="match status" value="1"/>
</dbReference>
<dbReference type="Pfam" id="PF00709">
    <property type="entry name" value="Adenylsucc_synt"/>
    <property type="match status" value="1"/>
</dbReference>
<dbReference type="SMART" id="SM00788">
    <property type="entry name" value="Adenylsucc_synt"/>
    <property type="match status" value="1"/>
</dbReference>
<dbReference type="SUPFAM" id="SSF52540">
    <property type="entry name" value="P-loop containing nucleoside triphosphate hydrolases"/>
    <property type="match status" value="1"/>
</dbReference>
<dbReference type="PROSITE" id="PS01266">
    <property type="entry name" value="ADENYLOSUCCIN_SYN_1"/>
    <property type="match status" value="1"/>
</dbReference>
<dbReference type="PROSITE" id="PS00513">
    <property type="entry name" value="ADENYLOSUCCIN_SYN_2"/>
    <property type="match status" value="1"/>
</dbReference>